<gene>
    <name evidence="1" type="primary">pyrB</name>
    <name type="ordered locus">SbBS512_E4838</name>
</gene>
<protein>
    <recommendedName>
        <fullName evidence="1">Aspartate carbamoyltransferase catalytic subunit</fullName>
        <ecNumber evidence="1">2.1.3.2</ecNumber>
    </recommendedName>
    <alternativeName>
        <fullName evidence="1">Aspartate transcarbamylase</fullName>
        <shortName evidence="1">ATCase</shortName>
    </alternativeName>
</protein>
<name>PYRB_SHIB3</name>
<organism>
    <name type="scientific">Shigella boydii serotype 18 (strain CDC 3083-94 / BS512)</name>
    <dbReference type="NCBI Taxonomy" id="344609"/>
    <lineage>
        <taxon>Bacteria</taxon>
        <taxon>Pseudomonadati</taxon>
        <taxon>Pseudomonadota</taxon>
        <taxon>Gammaproteobacteria</taxon>
        <taxon>Enterobacterales</taxon>
        <taxon>Enterobacteriaceae</taxon>
        <taxon>Shigella</taxon>
    </lineage>
</organism>
<evidence type="ECO:0000255" key="1">
    <source>
        <dbReference type="HAMAP-Rule" id="MF_00001"/>
    </source>
</evidence>
<proteinExistence type="inferred from homology"/>
<keyword id="KW-0665">Pyrimidine biosynthesis</keyword>
<keyword id="KW-1185">Reference proteome</keyword>
<keyword id="KW-0808">Transferase</keyword>
<dbReference type="EC" id="2.1.3.2" evidence="1"/>
<dbReference type="EMBL" id="CP001063">
    <property type="protein sequence ID" value="ACD09622.1"/>
    <property type="molecule type" value="Genomic_DNA"/>
</dbReference>
<dbReference type="RefSeq" id="WP_000013046.1">
    <property type="nucleotide sequence ID" value="NC_010658.1"/>
</dbReference>
<dbReference type="SMR" id="B2TYZ8"/>
<dbReference type="STRING" id="344609.SbBS512_E4838"/>
<dbReference type="GeneID" id="93777579"/>
<dbReference type="KEGG" id="sbc:SbBS512_E4838"/>
<dbReference type="HOGENOM" id="CLU_043846_1_2_6"/>
<dbReference type="UniPathway" id="UPA00070">
    <property type="reaction ID" value="UER00116"/>
</dbReference>
<dbReference type="Proteomes" id="UP000001030">
    <property type="component" value="Chromosome"/>
</dbReference>
<dbReference type="GO" id="GO:0005829">
    <property type="term" value="C:cytosol"/>
    <property type="evidence" value="ECO:0007669"/>
    <property type="project" value="TreeGrafter"/>
</dbReference>
<dbReference type="GO" id="GO:0016597">
    <property type="term" value="F:amino acid binding"/>
    <property type="evidence" value="ECO:0007669"/>
    <property type="project" value="InterPro"/>
</dbReference>
<dbReference type="GO" id="GO:0004070">
    <property type="term" value="F:aspartate carbamoyltransferase activity"/>
    <property type="evidence" value="ECO:0007669"/>
    <property type="project" value="UniProtKB-UniRule"/>
</dbReference>
<dbReference type="GO" id="GO:0006207">
    <property type="term" value="P:'de novo' pyrimidine nucleobase biosynthetic process"/>
    <property type="evidence" value="ECO:0007669"/>
    <property type="project" value="InterPro"/>
</dbReference>
<dbReference type="GO" id="GO:0044205">
    <property type="term" value="P:'de novo' UMP biosynthetic process"/>
    <property type="evidence" value="ECO:0007669"/>
    <property type="project" value="UniProtKB-UniRule"/>
</dbReference>
<dbReference type="GO" id="GO:0006520">
    <property type="term" value="P:amino acid metabolic process"/>
    <property type="evidence" value="ECO:0007669"/>
    <property type="project" value="InterPro"/>
</dbReference>
<dbReference type="FunFam" id="3.40.50.1370:FF:000001">
    <property type="entry name" value="Aspartate carbamoyltransferase"/>
    <property type="match status" value="1"/>
</dbReference>
<dbReference type="FunFam" id="3.40.50.1370:FF:000002">
    <property type="entry name" value="Aspartate carbamoyltransferase 2"/>
    <property type="match status" value="1"/>
</dbReference>
<dbReference type="Gene3D" id="3.40.50.1370">
    <property type="entry name" value="Aspartate/ornithine carbamoyltransferase"/>
    <property type="match status" value="2"/>
</dbReference>
<dbReference type="HAMAP" id="MF_00001">
    <property type="entry name" value="Asp_carb_tr"/>
    <property type="match status" value="1"/>
</dbReference>
<dbReference type="InterPro" id="IPR006132">
    <property type="entry name" value="Asp/Orn_carbamoyltranf_P-bd"/>
</dbReference>
<dbReference type="InterPro" id="IPR006130">
    <property type="entry name" value="Asp/Orn_carbamoylTrfase"/>
</dbReference>
<dbReference type="InterPro" id="IPR036901">
    <property type="entry name" value="Asp/Orn_carbamoylTrfase_sf"/>
</dbReference>
<dbReference type="InterPro" id="IPR002082">
    <property type="entry name" value="Asp_carbamoyltransf"/>
</dbReference>
<dbReference type="InterPro" id="IPR006131">
    <property type="entry name" value="Asp_carbamoyltransf_Asp/Orn-bd"/>
</dbReference>
<dbReference type="NCBIfam" id="TIGR00670">
    <property type="entry name" value="asp_carb_tr"/>
    <property type="match status" value="1"/>
</dbReference>
<dbReference type="NCBIfam" id="NF002032">
    <property type="entry name" value="PRK00856.1"/>
    <property type="match status" value="1"/>
</dbReference>
<dbReference type="PANTHER" id="PTHR45753:SF6">
    <property type="entry name" value="ASPARTATE CARBAMOYLTRANSFERASE"/>
    <property type="match status" value="1"/>
</dbReference>
<dbReference type="PANTHER" id="PTHR45753">
    <property type="entry name" value="ORNITHINE CARBAMOYLTRANSFERASE, MITOCHONDRIAL"/>
    <property type="match status" value="1"/>
</dbReference>
<dbReference type="Pfam" id="PF00185">
    <property type="entry name" value="OTCace"/>
    <property type="match status" value="1"/>
</dbReference>
<dbReference type="Pfam" id="PF02729">
    <property type="entry name" value="OTCace_N"/>
    <property type="match status" value="1"/>
</dbReference>
<dbReference type="PRINTS" id="PR00100">
    <property type="entry name" value="AOTCASE"/>
</dbReference>
<dbReference type="PRINTS" id="PR00101">
    <property type="entry name" value="ATCASE"/>
</dbReference>
<dbReference type="SUPFAM" id="SSF53671">
    <property type="entry name" value="Aspartate/ornithine carbamoyltransferase"/>
    <property type="match status" value="1"/>
</dbReference>
<dbReference type="PROSITE" id="PS00097">
    <property type="entry name" value="CARBAMOYLTRANSFERASE"/>
    <property type="match status" value="1"/>
</dbReference>
<reference key="1">
    <citation type="submission" date="2008-05" db="EMBL/GenBank/DDBJ databases">
        <title>Complete sequence of Shigella boydii serotype 18 strain BS512.</title>
        <authorList>
            <person name="Rasko D.A."/>
            <person name="Rosovitz M."/>
            <person name="Maurelli A.T."/>
            <person name="Myers G."/>
            <person name="Seshadri R."/>
            <person name="Cer R."/>
            <person name="Jiang L."/>
            <person name="Ravel J."/>
            <person name="Sebastian Y."/>
        </authorList>
    </citation>
    <scope>NUCLEOTIDE SEQUENCE [LARGE SCALE GENOMIC DNA]</scope>
    <source>
        <strain>CDC 3083-94 / BS512</strain>
    </source>
</reference>
<sequence>MANPLYQKHIISINDLSRDDLNLVLATAAKLKANPQPELLKHKVIASCFFEASTRTRLSFETSMHRLGASVVGFSDSANTSLGKKGETLADTISVISTYVDAIVMRHPQEGAARLATEFSGNVPVLNAGDGSNQHPTQTLLDLFTIQETQGRLDNLHVAMVGDLKYGRTVHSLTQALAKFDGNRFYFIAPDALAMPQYILDMLDEKGIAWSLHSSIEEVMAEVDILYMTRVQKERLDPSEYANVKAQFVLRASDLHNAKANMKVLHPLPRVDEIATDVDKTPHAWYFQQAGNGIFARQALLALVLNRDLVL</sequence>
<feature type="chain" id="PRO_1000088802" description="Aspartate carbamoyltransferase catalytic subunit">
    <location>
        <begin position="1"/>
        <end position="311"/>
    </location>
</feature>
<feature type="binding site" evidence="1">
    <location>
        <position position="55"/>
    </location>
    <ligand>
        <name>carbamoyl phosphate</name>
        <dbReference type="ChEBI" id="CHEBI:58228"/>
    </ligand>
</feature>
<feature type="binding site" evidence="1">
    <location>
        <position position="56"/>
    </location>
    <ligand>
        <name>carbamoyl phosphate</name>
        <dbReference type="ChEBI" id="CHEBI:58228"/>
    </ligand>
</feature>
<feature type="binding site" evidence="1">
    <location>
        <position position="85"/>
    </location>
    <ligand>
        <name>L-aspartate</name>
        <dbReference type="ChEBI" id="CHEBI:29991"/>
    </ligand>
</feature>
<feature type="binding site" evidence="1">
    <location>
        <position position="106"/>
    </location>
    <ligand>
        <name>carbamoyl phosphate</name>
        <dbReference type="ChEBI" id="CHEBI:58228"/>
    </ligand>
</feature>
<feature type="binding site" evidence="1">
    <location>
        <position position="135"/>
    </location>
    <ligand>
        <name>carbamoyl phosphate</name>
        <dbReference type="ChEBI" id="CHEBI:58228"/>
    </ligand>
</feature>
<feature type="binding site" evidence="1">
    <location>
        <position position="138"/>
    </location>
    <ligand>
        <name>carbamoyl phosphate</name>
        <dbReference type="ChEBI" id="CHEBI:58228"/>
    </ligand>
</feature>
<feature type="binding site" evidence="1">
    <location>
        <position position="168"/>
    </location>
    <ligand>
        <name>L-aspartate</name>
        <dbReference type="ChEBI" id="CHEBI:29991"/>
    </ligand>
</feature>
<feature type="binding site" evidence="1">
    <location>
        <position position="230"/>
    </location>
    <ligand>
        <name>L-aspartate</name>
        <dbReference type="ChEBI" id="CHEBI:29991"/>
    </ligand>
</feature>
<feature type="binding site" evidence="1">
    <location>
        <position position="268"/>
    </location>
    <ligand>
        <name>carbamoyl phosphate</name>
        <dbReference type="ChEBI" id="CHEBI:58228"/>
    </ligand>
</feature>
<feature type="binding site" evidence="1">
    <location>
        <position position="269"/>
    </location>
    <ligand>
        <name>carbamoyl phosphate</name>
        <dbReference type="ChEBI" id="CHEBI:58228"/>
    </ligand>
</feature>
<comment type="function">
    <text evidence="1">Catalyzes the condensation of carbamoyl phosphate and aspartate to form carbamoyl aspartate and inorganic phosphate, the committed step in the de novo pyrimidine nucleotide biosynthesis pathway.</text>
</comment>
<comment type="catalytic activity">
    <reaction evidence="1">
        <text>carbamoyl phosphate + L-aspartate = N-carbamoyl-L-aspartate + phosphate + H(+)</text>
        <dbReference type="Rhea" id="RHEA:20013"/>
        <dbReference type="ChEBI" id="CHEBI:15378"/>
        <dbReference type="ChEBI" id="CHEBI:29991"/>
        <dbReference type="ChEBI" id="CHEBI:32814"/>
        <dbReference type="ChEBI" id="CHEBI:43474"/>
        <dbReference type="ChEBI" id="CHEBI:58228"/>
        <dbReference type="EC" id="2.1.3.2"/>
    </reaction>
</comment>
<comment type="pathway">
    <text evidence="1">Pyrimidine metabolism; UMP biosynthesis via de novo pathway; (S)-dihydroorotate from bicarbonate: step 2/3.</text>
</comment>
<comment type="subunit">
    <text evidence="1">Heterododecamer (2C3:3R2) of six catalytic PyrB chains organized as two trimers (C3), and six regulatory PyrI chains organized as three dimers (R2).</text>
</comment>
<comment type="similarity">
    <text evidence="1">Belongs to the aspartate/ornithine carbamoyltransferase superfamily. ATCase family.</text>
</comment>
<accession>B2TYZ8</accession>